<sequence>MTSPALNFITFNQDHSCLAVGTSKGFRIYHTDPFSRIFSSDDGNIAIIEMLFSTSLVALILSPRHLIIQNTKRASTICELTFPSAVLAVRLNRKRLAVVLEEEIYLYDISNMSLLHTIATSPNPSAICALSPSSENCFIAYPLPKPREDPDANRPAHAPPQSTFVAPTSGEVLIFDTLSLKAVNVIEAHRSPLCCICLNNEGTLLATASETGTIIRVFSVPKGKKLYQFRRGTYPSTIYSMSFNLSSTLLCVSSTSDTIHIFRLGAPPGNTTPAGAPIESPASQRQDRWSRARSYDDSESPGASAADSPKNEPAELNGPGAGNNQGGHTRGSGSFSSMLRRSSQIMGRGVAGVMGSYLPQSVTEMWEPLRDFAYIKIPKSAAASGASRTLRDAPGGPLRSVVAMSSSSPQVMVVTSDGGFYVYNIDMEHGGEGYLVKQFSVNHSVLEGDDKSDASGYGS</sequence>
<proteinExistence type="inferred from homology"/>
<reference key="1">
    <citation type="journal article" date="2007" name="Science">
        <title>The Fusarium graminearum genome reveals a link between localized polymorphism and pathogen specialization.</title>
        <authorList>
            <person name="Cuomo C.A."/>
            <person name="Gueldener U."/>
            <person name="Xu J.-R."/>
            <person name="Trail F."/>
            <person name="Turgeon B.G."/>
            <person name="Di Pietro A."/>
            <person name="Walton J.D."/>
            <person name="Ma L.-J."/>
            <person name="Baker S.E."/>
            <person name="Rep M."/>
            <person name="Adam G."/>
            <person name="Antoniw J."/>
            <person name="Baldwin T."/>
            <person name="Calvo S.E."/>
            <person name="Chang Y.-L."/>
            <person name="DeCaprio D."/>
            <person name="Gale L.R."/>
            <person name="Gnerre S."/>
            <person name="Goswami R.S."/>
            <person name="Hammond-Kosack K."/>
            <person name="Harris L.J."/>
            <person name="Hilburn K."/>
            <person name="Kennell J.C."/>
            <person name="Kroken S."/>
            <person name="Magnuson J.K."/>
            <person name="Mannhaupt G."/>
            <person name="Mauceli E.W."/>
            <person name="Mewes H.-W."/>
            <person name="Mitterbauer R."/>
            <person name="Muehlbauer G."/>
            <person name="Muensterkoetter M."/>
            <person name="Nelson D."/>
            <person name="O'Donnell K."/>
            <person name="Ouellet T."/>
            <person name="Qi W."/>
            <person name="Quesneville H."/>
            <person name="Roncero M.I.G."/>
            <person name="Seong K.-Y."/>
            <person name="Tetko I.V."/>
            <person name="Urban M."/>
            <person name="Waalwijk C."/>
            <person name="Ward T.J."/>
            <person name="Yao J."/>
            <person name="Birren B.W."/>
            <person name="Kistler H.C."/>
        </authorList>
    </citation>
    <scope>NUCLEOTIDE SEQUENCE [LARGE SCALE GENOMIC DNA]</scope>
    <source>
        <strain>ATCC MYA-4620 / CBS 123657 / FGSC 9075 / NRRL 31084 / PH-1</strain>
    </source>
</reference>
<reference key="2">
    <citation type="journal article" date="2010" name="Nature">
        <title>Comparative genomics reveals mobile pathogenicity chromosomes in Fusarium.</title>
        <authorList>
            <person name="Ma L.-J."/>
            <person name="van der Does H.C."/>
            <person name="Borkovich K.A."/>
            <person name="Coleman J.J."/>
            <person name="Daboussi M.-J."/>
            <person name="Di Pietro A."/>
            <person name="Dufresne M."/>
            <person name="Freitag M."/>
            <person name="Grabherr M."/>
            <person name="Henrissat B."/>
            <person name="Houterman P.M."/>
            <person name="Kang S."/>
            <person name="Shim W.-B."/>
            <person name="Woloshuk C."/>
            <person name="Xie X."/>
            <person name="Xu J.-R."/>
            <person name="Antoniw J."/>
            <person name="Baker S.E."/>
            <person name="Bluhm B.H."/>
            <person name="Breakspear A."/>
            <person name="Brown D.W."/>
            <person name="Butchko R.A.E."/>
            <person name="Chapman S."/>
            <person name="Coulson R."/>
            <person name="Coutinho P.M."/>
            <person name="Danchin E.G.J."/>
            <person name="Diener A."/>
            <person name="Gale L.R."/>
            <person name="Gardiner D.M."/>
            <person name="Goff S."/>
            <person name="Hammond-Kosack K.E."/>
            <person name="Hilburn K."/>
            <person name="Hua-Van A."/>
            <person name="Jonkers W."/>
            <person name="Kazan K."/>
            <person name="Kodira C.D."/>
            <person name="Koehrsen M."/>
            <person name="Kumar L."/>
            <person name="Lee Y.-H."/>
            <person name="Li L."/>
            <person name="Manners J.M."/>
            <person name="Miranda-Saavedra D."/>
            <person name="Mukherjee M."/>
            <person name="Park G."/>
            <person name="Park J."/>
            <person name="Park S.-Y."/>
            <person name="Proctor R.H."/>
            <person name="Regev A."/>
            <person name="Ruiz-Roldan M.C."/>
            <person name="Sain D."/>
            <person name="Sakthikumar S."/>
            <person name="Sykes S."/>
            <person name="Schwartz D.C."/>
            <person name="Turgeon B.G."/>
            <person name="Wapinski I."/>
            <person name="Yoder O."/>
            <person name="Young S."/>
            <person name="Zeng Q."/>
            <person name="Zhou S."/>
            <person name="Galagan J."/>
            <person name="Cuomo C.A."/>
            <person name="Kistler H.C."/>
            <person name="Rep M."/>
        </authorList>
    </citation>
    <scope>GENOME REANNOTATION</scope>
    <source>
        <strain>ATCC MYA-4620 / CBS 123657 / FGSC 9075 / NRRL 31084 / PH-1</strain>
    </source>
</reference>
<reference key="3">
    <citation type="journal article" date="2015" name="BMC Genomics">
        <title>The completed genome sequence of the pathogenic ascomycete fungus Fusarium graminearum.</title>
        <authorList>
            <person name="King R."/>
            <person name="Urban M."/>
            <person name="Hammond-Kosack M.C.U."/>
            <person name="Hassani-Pak K."/>
            <person name="Hammond-Kosack K.E."/>
        </authorList>
    </citation>
    <scope>NUCLEOTIDE SEQUENCE [LARGE SCALE GENOMIC DNA]</scope>
    <source>
        <strain>ATCC MYA-4620 / CBS 123657 / FGSC 9075 / NRRL 31084 / PH-1</strain>
    </source>
</reference>
<reference key="4">
    <citation type="journal article" date="2017" name="Sci. Rep.">
        <title>Genome-wide functional analysis reveals that autophagy is necessary for growth, sporulation, deoxynivalenol production and virulence in Fusarium graminearum.</title>
        <authorList>
            <person name="Lv W."/>
            <person name="Wang C."/>
            <person name="Yang N."/>
            <person name="Que Y."/>
            <person name="Talbot N.J."/>
            <person name="Wang Z."/>
        </authorList>
    </citation>
    <scope>IDENTIFICATION</scope>
    <scope>FUNCTION</scope>
    <scope>DISRUPTION PHENOTYPE</scope>
</reference>
<protein>
    <recommendedName>
        <fullName evidence="5">Autophagy-related protein 18</fullName>
    </recommendedName>
</protein>
<dbReference type="EMBL" id="HG970333">
    <property type="protein sequence ID" value="SCB65938.1"/>
    <property type="status" value="ALT_SEQ"/>
    <property type="molecule type" value="Genomic_DNA"/>
</dbReference>
<dbReference type="RefSeq" id="XP_011321319.1">
    <property type="nucleotide sequence ID" value="XM_011323017.1"/>
</dbReference>
<dbReference type="SMR" id="I1RKA1"/>
<dbReference type="FunCoup" id="I1RKA1">
    <property type="interactions" value="559"/>
</dbReference>
<dbReference type="STRING" id="229533.I1RKA1"/>
<dbReference type="KEGG" id="fgr:FGSG_04297"/>
<dbReference type="eggNOG" id="KOG2110">
    <property type="taxonomic scope" value="Eukaryota"/>
</dbReference>
<dbReference type="HOGENOM" id="CLU_025895_5_2_1"/>
<dbReference type="InParanoid" id="I1RKA1"/>
<dbReference type="OrthoDB" id="110715at110618"/>
<dbReference type="Proteomes" id="UP000070720">
    <property type="component" value="Chromosome 2"/>
</dbReference>
<dbReference type="GO" id="GO:0010008">
    <property type="term" value="C:endosome membrane"/>
    <property type="evidence" value="ECO:0007669"/>
    <property type="project" value="UniProtKB-SubCell"/>
</dbReference>
<dbReference type="GO" id="GO:0034045">
    <property type="term" value="C:phagophore assembly site membrane"/>
    <property type="evidence" value="ECO:0007669"/>
    <property type="project" value="UniProtKB-SubCell"/>
</dbReference>
<dbReference type="GO" id="GO:0005774">
    <property type="term" value="C:vacuolar membrane"/>
    <property type="evidence" value="ECO:0007669"/>
    <property type="project" value="UniProtKB-SubCell"/>
</dbReference>
<dbReference type="GO" id="GO:0006914">
    <property type="term" value="P:autophagy"/>
    <property type="evidence" value="ECO:0007669"/>
    <property type="project" value="UniProtKB-KW"/>
</dbReference>
<dbReference type="GO" id="GO:0015031">
    <property type="term" value="P:protein transport"/>
    <property type="evidence" value="ECO:0007669"/>
    <property type="project" value="UniProtKB-KW"/>
</dbReference>
<dbReference type="FunFam" id="2.130.10.10:FF:000965">
    <property type="entry name" value="Autophagy-like protein 18 Atg18"/>
    <property type="match status" value="1"/>
</dbReference>
<dbReference type="Gene3D" id="2.130.10.10">
    <property type="entry name" value="YVTN repeat-like/Quinoprotein amine dehydrogenase"/>
    <property type="match status" value="1"/>
</dbReference>
<dbReference type="InterPro" id="IPR048720">
    <property type="entry name" value="PROPPIN"/>
</dbReference>
<dbReference type="InterPro" id="IPR015943">
    <property type="entry name" value="WD40/YVTN_repeat-like_dom_sf"/>
</dbReference>
<dbReference type="InterPro" id="IPR036322">
    <property type="entry name" value="WD40_repeat_dom_sf"/>
</dbReference>
<dbReference type="InterPro" id="IPR001680">
    <property type="entry name" value="WD40_rpt"/>
</dbReference>
<dbReference type="PANTHER" id="PTHR11227">
    <property type="entry name" value="WD-REPEAT PROTEIN INTERACTING WITH PHOSPHOINOSIDES WIPI -RELATED"/>
    <property type="match status" value="1"/>
</dbReference>
<dbReference type="Pfam" id="PF21032">
    <property type="entry name" value="PROPPIN"/>
    <property type="match status" value="2"/>
</dbReference>
<dbReference type="SMART" id="SM00320">
    <property type="entry name" value="WD40"/>
    <property type="match status" value="3"/>
</dbReference>
<dbReference type="SUPFAM" id="SSF50978">
    <property type="entry name" value="WD40 repeat-like"/>
    <property type="match status" value="1"/>
</dbReference>
<accession>I1RKA1</accession>
<accession>A0A1C3YN51</accession>
<comment type="function">
    <text evidence="1 4">Component of the PI(3,5)P2 regulatory complex that regulates both the synthesis and turnover of phosphatidylinositol 3,5-bisphosphate (PtdIns(3,5)P2) (By similarity). Plays an important role in osmotically-induced vacuole fragmentation (By similarity). Required for cytoplasm to vacuole transport (Cvt) vesicle formation, pexophagy and starvation-induced autophagy (By similarity). Involved in correct ATG9 trafficking to the pre-autophagosomal structure (By similarity). With ATG2, protects ATG8 from ATG4-mediated cleavage (By similarity). Autophagy is required for proper vegetative growth, asexual/sexual reproduction, and full virulence (PubMed:28894236). Autophagy is particularly involved in the biosynthesis of deoxynivalenol (DON), an important virulence determinant (PubMed:28894236).</text>
</comment>
<comment type="subunit">
    <text evidence="1">Component of the PI(3,5)P2 regulatory complex (By similarity). Interacts with ATG2 and ATG9 (By similarity). The ATG2-ATG18 complex is essential for autophagosome formation (By similarity).</text>
</comment>
<comment type="subcellular location">
    <subcellularLocation>
        <location evidence="1">Preautophagosomal structure membrane</location>
        <topology evidence="1">Peripheral membrane protein</topology>
    </subcellularLocation>
    <subcellularLocation>
        <location evidence="1">Vacuole membrane</location>
        <topology evidence="1">Peripheral membrane protein</topology>
    </subcellularLocation>
    <subcellularLocation>
        <location evidence="1">Endosome membrane</location>
        <topology evidence="1">Peripheral membrane protein</topology>
    </subcellularLocation>
</comment>
<comment type="domain">
    <text evidence="1">The 377 first amino acids might form a beta-propeller domain involved in specific binding to phosphatidylinositol 3,5-bisphosphate (PIP2), leading to the association of the protein to the membrane (By similarity). Association to the membrane can also occur through binding to phosphatidylinositol 3-monophosphate (PI3P) (By similarity).</text>
</comment>
<comment type="domain">
    <text evidence="1">The L/FRRG motif is essential for the cytoplasm to vacuole transport (Cvt) pathway, for the recruitment of ATG8 and ATG16 to the PAS in nutrient-rich medium, and for its recruitment to and dissociation from the PAS under starvation conditions (By similarity).</text>
</comment>
<comment type="disruption phenotype">
    <text evidence="4">Does not significantly decrease the growth rate under nutrient-rich conditions (PubMed:28894236).</text>
</comment>
<comment type="similarity">
    <text evidence="6">Belongs to the WD repeat PROPPIN family.</text>
</comment>
<comment type="sequence caution" evidence="6">
    <conflict type="erroneous gene model prediction">
        <sequence resource="EMBL-CDS" id="SCB65938"/>
    </conflict>
</comment>
<name>ATG18_GIBZE</name>
<feature type="chain" id="PRO_0000443918" description="Autophagy-related protein 18">
    <location>
        <begin position="1"/>
        <end position="459"/>
    </location>
</feature>
<feature type="repeat" description="WD 1" evidence="2">
    <location>
        <begin position="1"/>
        <end position="39"/>
    </location>
</feature>
<feature type="repeat" description="WD 2" evidence="2">
    <location>
        <begin position="188"/>
        <end position="228"/>
    </location>
</feature>
<feature type="repeat" description="WD 3" evidence="2">
    <location>
        <begin position="233"/>
        <end position="272"/>
    </location>
</feature>
<feature type="repeat" description="WD 4" evidence="2">
    <location>
        <begin position="393"/>
        <end position="433"/>
    </location>
</feature>
<feature type="region of interest" description="Necessary for proper localization to vacuole membrane" evidence="1">
    <location>
        <begin position="229"/>
        <end position="232"/>
    </location>
</feature>
<feature type="region of interest" description="Disordered" evidence="3">
    <location>
        <begin position="264"/>
        <end position="339"/>
    </location>
</feature>
<feature type="short sequence motif" description="L/FRRG motif" evidence="1">
    <location>
        <begin position="229"/>
        <end position="233"/>
    </location>
</feature>
<feature type="compositionally biased region" description="Low complexity" evidence="3">
    <location>
        <begin position="265"/>
        <end position="277"/>
    </location>
</feature>
<feature type="compositionally biased region" description="Basic and acidic residues" evidence="3">
    <location>
        <begin position="285"/>
        <end position="296"/>
    </location>
</feature>
<feature type="compositionally biased region" description="Gly residues" evidence="3">
    <location>
        <begin position="319"/>
        <end position="330"/>
    </location>
</feature>
<gene>
    <name evidence="5" type="primary">ATG18</name>
    <name type="ORF">FG04297</name>
    <name type="ORF">FGRAMPH1_01T14949</name>
</gene>
<organism>
    <name type="scientific">Gibberella zeae (strain ATCC MYA-4620 / CBS 123657 / FGSC 9075 / NRRL 31084 / PH-1)</name>
    <name type="common">Wheat head blight fungus</name>
    <name type="synonym">Fusarium graminearum</name>
    <dbReference type="NCBI Taxonomy" id="229533"/>
    <lineage>
        <taxon>Eukaryota</taxon>
        <taxon>Fungi</taxon>
        <taxon>Dikarya</taxon>
        <taxon>Ascomycota</taxon>
        <taxon>Pezizomycotina</taxon>
        <taxon>Sordariomycetes</taxon>
        <taxon>Hypocreomycetidae</taxon>
        <taxon>Hypocreales</taxon>
        <taxon>Nectriaceae</taxon>
        <taxon>Fusarium</taxon>
    </lineage>
</organism>
<evidence type="ECO:0000250" key="1">
    <source>
        <dbReference type="UniProtKB" id="P43601"/>
    </source>
</evidence>
<evidence type="ECO:0000255" key="2"/>
<evidence type="ECO:0000256" key="3">
    <source>
        <dbReference type="SAM" id="MobiDB-lite"/>
    </source>
</evidence>
<evidence type="ECO:0000269" key="4">
    <source>
    </source>
</evidence>
<evidence type="ECO:0000303" key="5">
    <source>
    </source>
</evidence>
<evidence type="ECO:0000305" key="6"/>
<keyword id="KW-0072">Autophagy</keyword>
<keyword id="KW-0967">Endosome</keyword>
<keyword id="KW-0472">Membrane</keyword>
<keyword id="KW-0653">Protein transport</keyword>
<keyword id="KW-1185">Reference proteome</keyword>
<keyword id="KW-0677">Repeat</keyword>
<keyword id="KW-0813">Transport</keyword>
<keyword id="KW-0926">Vacuole</keyword>
<keyword id="KW-0853">WD repeat</keyword>